<name>RAB37_MOUSE</name>
<gene>
    <name evidence="11" type="primary">Rab37</name>
</gene>
<evidence type="ECO:0000250" key="1"/>
<evidence type="ECO:0000250" key="2">
    <source>
        <dbReference type="UniProtKB" id="P61026"/>
    </source>
</evidence>
<evidence type="ECO:0000250" key="3">
    <source>
        <dbReference type="UniProtKB" id="P62820"/>
    </source>
</evidence>
<evidence type="ECO:0000250" key="4">
    <source>
        <dbReference type="UniProtKB" id="Q96AX2"/>
    </source>
</evidence>
<evidence type="ECO:0000255" key="5"/>
<evidence type="ECO:0000256" key="6">
    <source>
        <dbReference type="SAM" id="MobiDB-lite"/>
    </source>
</evidence>
<evidence type="ECO:0000269" key="7">
    <source>
    </source>
</evidence>
<evidence type="ECO:0000269" key="8">
    <source>
    </source>
</evidence>
<evidence type="ECO:0000269" key="9">
    <source>
    </source>
</evidence>
<evidence type="ECO:0000305" key="10"/>
<evidence type="ECO:0000312" key="11">
    <source>
        <dbReference type="MGI" id="MGI:1929945"/>
    </source>
</evidence>
<comment type="function">
    <text evidence="9">The small GTPases Rab are key regulators of intracellular membrane trafficking, from the formation of transport vesicles to their fusion with membranes. Rabs cycle between an inactive GDP-bound form and an active GTP-bound form that is able to recruit to membranes different sets of downstream effectors directly responsible for vesicle formation, movement, tethering and fusion (PubMed:38536817). Acts as an organizer for autophagosome biogenesis in a GTP-dependent manner (PubMed:38536817). Involved in retinal homeostasis by autophagy regulation (PubMed:38536817).</text>
</comment>
<comment type="catalytic activity">
    <reaction evidence="4">
        <text>GTP + H2O = GDP + phosphate + H(+)</text>
        <dbReference type="Rhea" id="RHEA:19669"/>
        <dbReference type="ChEBI" id="CHEBI:15377"/>
        <dbReference type="ChEBI" id="CHEBI:15378"/>
        <dbReference type="ChEBI" id="CHEBI:37565"/>
        <dbReference type="ChEBI" id="CHEBI:43474"/>
        <dbReference type="ChEBI" id="CHEBI:58189"/>
        <dbReference type="EC" id="3.6.5.2"/>
    </reaction>
    <physiologicalReaction direction="left-to-right" evidence="4">
        <dbReference type="Rhea" id="RHEA:19670"/>
    </physiologicalReaction>
</comment>
<comment type="cofactor">
    <cofactor evidence="2">
        <name>Mg(2+)</name>
        <dbReference type="ChEBI" id="CHEBI:18420"/>
    </cofactor>
</comment>
<comment type="activity regulation">
    <text evidence="9 10">Regulated by guanine nucleotide exchange factors (GEFs) including RPGR which promote the exchange of bound GDP for free GTP (PubMed:38536817). Regulated by GTPase activating proteins (GAPs) which increase the GTP hydrolysis activity (Probable). Inhibited by GDP dissociation inhibitors (GDIs) (Probable).</text>
</comment>
<comment type="subunit">
    <text evidence="8 9">Interacts with RIMS1. Interacts (in GDP-bound form) with RPGR, RPGR functions as guanine exchange factor (GEF) (PubMed:38536817).</text>
</comment>
<comment type="subcellular location">
    <subcellularLocation>
        <location>Cytoplasmic vesicle</location>
    </subcellularLocation>
    <subcellularLocation>
        <location evidence="9">Cell projection</location>
        <location evidence="9">Cilium</location>
    </subcellularLocation>
    <text evidence="7 9">Secretory granules (PubMed:10722846). Located mainly in the connecting cilia between the outer segment and inner segment and also observed in the outer plexiform layer, inner plexiform layer, and ganglion cell layer of the retinas (PubMed:38536817).</text>
</comment>
<comment type="tissue specificity">
    <text evidence="7 9">Expressed in the retina (at protein level) (PubMed:38536817). Specifically expressed in the bone marrow mast cells (PubMed:10722846).</text>
</comment>
<comment type="domain">
    <text evidence="3">Switch 1, switch 2 and the interswitch regions are characteristic of Rab GTPases and mediate the interactions with Rab downstream effectors. The switch regions undergo conformational changes upon nucleotide binding which drive interaction with specific sets of effector proteins, with most effectors only binding to GTP-bound Rab.</text>
</comment>
<comment type="similarity">
    <text evidence="10">Belongs to the small GTPase superfamily. Rab family.</text>
</comment>
<sequence>MTGTPGAATAGDGEAPERSPPFSPNYDLTGKVMLLGDSGVGKTCFLIQFKDGAFLSGTFIATVGIDSRNKVVTVDGARVKLQIWDTAGQERFRSVTHAYYRDAQALLLLYDITNQSSFDNIRAWLTEIHEYAQRDVVIMLLGNKADVSSERVIRSEDGETLAREYGVPFMETSAKTGMNVELAFLAIAKELKYRAGRQPDEPSFQIRDYVESQKKRSSCCSFV</sequence>
<feature type="initiator methionine" description="Removed" evidence="4">
    <location>
        <position position="1"/>
    </location>
</feature>
<feature type="chain" id="PRO_0000121250" description="Ras-related protein Rab-37">
    <location>
        <begin position="2"/>
        <end position="220"/>
    </location>
</feature>
<feature type="propeptide" id="PRO_0000370829" description="Removed in mature form" evidence="5">
    <location>
        <begin position="221"/>
        <end position="223"/>
    </location>
</feature>
<feature type="region of interest" description="Disordered" evidence="6">
    <location>
        <begin position="1"/>
        <end position="22"/>
    </location>
</feature>
<feature type="short sequence motif" description="Switch 1" evidence="3">
    <location>
        <begin position="52"/>
        <end position="67"/>
    </location>
</feature>
<feature type="short sequence motif" description="Switch 2" evidence="3">
    <location>
        <begin position="85"/>
        <end position="102"/>
    </location>
</feature>
<feature type="compositionally biased region" description="Low complexity" evidence="6">
    <location>
        <begin position="1"/>
        <end position="13"/>
    </location>
</feature>
<feature type="binding site" evidence="2">
    <location>
        <position position="38"/>
    </location>
    <ligand>
        <name>GTP</name>
        <dbReference type="ChEBI" id="CHEBI:37565"/>
    </ligand>
</feature>
<feature type="binding site" evidence="2">
    <location>
        <position position="39"/>
    </location>
    <ligand>
        <name>GTP</name>
        <dbReference type="ChEBI" id="CHEBI:37565"/>
    </ligand>
</feature>
<feature type="binding site" evidence="2">
    <location>
        <position position="40"/>
    </location>
    <ligand>
        <name>GTP</name>
        <dbReference type="ChEBI" id="CHEBI:37565"/>
    </ligand>
</feature>
<feature type="binding site" evidence="2">
    <location>
        <position position="41"/>
    </location>
    <ligand>
        <name>GTP</name>
        <dbReference type="ChEBI" id="CHEBI:37565"/>
    </ligand>
</feature>
<feature type="binding site" evidence="2">
    <location>
        <position position="42"/>
    </location>
    <ligand>
        <name>GTP</name>
        <dbReference type="ChEBI" id="CHEBI:37565"/>
    </ligand>
</feature>
<feature type="binding site" evidence="2">
    <location>
        <position position="43"/>
    </location>
    <ligand>
        <name>GTP</name>
        <dbReference type="ChEBI" id="CHEBI:37565"/>
    </ligand>
</feature>
<feature type="binding site" evidence="2">
    <location>
        <position position="43"/>
    </location>
    <ligand>
        <name>Mg(2+)</name>
        <dbReference type="ChEBI" id="CHEBI:18420"/>
    </ligand>
</feature>
<feature type="binding site" evidence="2">
    <location>
        <position position="44"/>
    </location>
    <ligand>
        <name>GTP</name>
        <dbReference type="ChEBI" id="CHEBI:37565"/>
    </ligand>
</feature>
<feature type="binding site" evidence="2">
    <location>
        <position position="62"/>
    </location>
    <ligand>
        <name>GTP</name>
        <dbReference type="ChEBI" id="CHEBI:37565"/>
    </ligand>
</feature>
<feature type="binding site" evidence="2">
    <location>
        <position position="62"/>
    </location>
    <ligand>
        <name>Mg(2+)</name>
        <dbReference type="ChEBI" id="CHEBI:18420"/>
    </ligand>
</feature>
<feature type="binding site" evidence="2">
    <location>
        <position position="85"/>
    </location>
    <ligand>
        <name>Mg(2+)</name>
        <dbReference type="ChEBI" id="CHEBI:18420"/>
    </ligand>
</feature>
<feature type="binding site" evidence="2">
    <location>
        <position position="88"/>
    </location>
    <ligand>
        <name>GTP</name>
        <dbReference type="ChEBI" id="CHEBI:37565"/>
    </ligand>
</feature>
<feature type="binding site" evidence="2">
    <location>
        <position position="143"/>
    </location>
    <ligand>
        <name>GTP</name>
        <dbReference type="ChEBI" id="CHEBI:37565"/>
    </ligand>
</feature>
<feature type="binding site" evidence="2">
    <location>
        <position position="144"/>
    </location>
    <ligand>
        <name>GTP</name>
        <dbReference type="ChEBI" id="CHEBI:37565"/>
    </ligand>
</feature>
<feature type="binding site" evidence="2">
    <location>
        <position position="146"/>
    </location>
    <ligand>
        <name>GTP</name>
        <dbReference type="ChEBI" id="CHEBI:37565"/>
    </ligand>
</feature>
<feature type="binding site" evidence="2">
    <location>
        <position position="173"/>
    </location>
    <ligand>
        <name>GTP</name>
        <dbReference type="ChEBI" id="CHEBI:37565"/>
    </ligand>
</feature>
<feature type="binding site" evidence="2">
    <location>
        <position position="174"/>
    </location>
    <ligand>
        <name>GTP</name>
        <dbReference type="ChEBI" id="CHEBI:37565"/>
    </ligand>
</feature>
<feature type="binding site" evidence="2">
    <location>
        <position position="175"/>
    </location>
    <ligand>
        <name>GTP</name>
        <dbReference type="ChEBI" id="CHEBI:37565"/>
    </ligand>
</feature>
<feature type="modified residue" description="N-acetylthreonine" evidence="4">
    <location>
        <position position="2"/>
    </location>
</feature>
<feature type="modified residue" description="Cysteine methyl ester" evidence="5">
    <location>
        <position position="220"/>
    </location>
</feature>
<feature type="lipid moiety-binding region" description="S-geranylgeranyl cysteine" evidence="1">
    <location>
        <position position="219"/>
    </location>
</feature>
<feature type="lipid moiety-binding region" description="S-geranylgeranyl cysteine" evidence="1">
    <location>
        <position position="220"/>
    </location>
</feature>
<feature type="sequence conflict" description="In Ref. 1; AAF67162." evidence="10" ref="1">
    <original>S</original>
    <variation>F</variation>
    <location>
        <position position="67"/>
    </location>
</feature>
<accession>Q9JKM7</accession>
<accession>Q8C7E1</accession>
<keyword id="KW-0007">Acetylation</keyword>
<keyword id="KW-0966">Cell projection</keyword>
<keyword id="KW-0968">Cytoplasmic vesicle</keyword>
<keyword id="KW-0903">Direct protein sequencing</keyword>
<keyword id="KW-0342">GTP-binding</keyword>
<keyword id="KW-0378">Hydrolase</keyword>
<keyword id="KW-0449">Lipoprotein</keyword>
<keyword id="KW-0460">Magnesium</keyword>
<keyword id="KW-0479">Metal-binding</keyword>
<keyword id="KW-0488">Methylation</keyword>
<keyword id="KW-0547">Nucleotide-binding</keyword>
<keyword id="KW-0636">Prenylation</keyword>
<keyword id="KW-0653">Protein transport</keyword>
<keyword id="KW-1185">Reference proteome</keyword>
<keyword id="KW-0813">Transport</keyword>
<proteinExistence type="evidence at protein level"/>
<protein>
    <recommendedName>
        <fullName>Ras-related protein Rab-37</fullName>
        <ecNumber evidence="4">3.6.5.2</ecNumber>
    </recommendedName>
</protein>
<organism>
    <name type="scientific">Mus musculus</name>
    <name type="common">Mouse</name>
    <dbReference type="NCBI Taxonomy" id="10090"/>
    <lineage>
        <taxon>Eukaryota</taxon>
        <taxon>Metazoa</taxon>
        <taxon>Chordata</taxon>
        <taxon>Craniata</taxon>
        <taxon>Vertebrata</taxon>
        <taxon>Euteleostomi</taxon>
        <taxon>Mammalia</taxon>
        <taxon>Eutheria</taxon>
        <taxon>Euarchontoglires</taxon>
        <taxon>Glires</taxon>
        <taxon>Rodentia</taxon>
        <taxon>Myomorpha</taxon>
        <taxon>Muroidea</taxon>
        <taxon>Muridae</taxon>
        <taxon>Murinae</taxon>
        <taxon>Mus</taxon>
        <taxon>Mus</taxon>
    </lineage>
</organism>
<dbReference type="EC" id="3.6.5.2" evidence="4"/>
<dbReference type="EMBL" id="AF233582">
    <property type="protein sequence ID" value="AAF67162.1"/>
    <property type="molecule type" value="mRNA"/>
</dbReference>
<dbReference type="EMBL" id="AK050483">
    <property type="protein sequence ID" value="BAC34282.1"/>
    <property type="molecule type" value="mRNA"/>
</dbReference>
<dbReference type="CCDS" id="CCDS25620.1"/>
<dbReference type="RefSeq" id="NP_067386.3">
    <property type="nucleotide sequence ID" value="NM_021411.4"/>
</dbReference>
<dbReference type="SMR" id="Q9JKM7"/>
<dbReference type="BioGRID" id="208399">
    <property type="interactions" value="2"/>
</dbReference>
<dbReference type="FunCoup" id="Q9JKM7">
    <property type="interactions" value="817"/>
</dbReference>
<dbReference type="IntAct" id="Q9JKM7">
    <property type="interactions" value="4"/>
</dbReference>
<dbReference type="STRING" id="10090.ENSMUSP00000021076"/>
<dbReference type="iPTMnet" id="Q9JKM7"/>
<dbReference type="PhosphoSitePlus" id="Q9JKM7"/>
<dbReference type="jPOST" id="Q9JKM7"/>
<dbReference type="PaxDb" id="10090-ENSMUSP00000021076"/>
<dbReference type="ProteomicsDB" id="253145"/>
<dbReference type="DNASU" id="58222"/>
<dbReference type="GeneID" id="58222"/>
<dbReference type="KEGG" id="mmu:58222"/>
<dbReference type="AGR" id="MGI:1929945"/>
<dbReference type="CTD" id="326624"/>
<dbReference type="MGI" id="MGI:1929945">
    <property type="gene designation" value="Rab37"/>
</dbReference>
<dbReference type="eggNOG" id="KOG0083">
    <property type="taxonomic scope" value="Eukaryota"/>
</dbReference>
<dbReference type="InParanoid" id="Q9JKM7"/>
<dbReference type="OrthoDB" id="9989112at2759"/>
<dbReference type="PhylomeDB" id="Q9JKM7"/>
<dbReference type="Reactome" id="R-MMU-6798695">
    <property type="pathway name" value="Neutrophil degranulation"/>
</dbReference>
<dbReference type="Reactome" id="R-MMU-8873719">
    <property type="pathway name" value="RAB geranylgeranylation"/>
</dbReference>
<dbReference type="BioGRID-ORCS" id="58222">
    <property type="hits" value="2 hits in 80 CRISPR screens"/>
</dbReference>
<dbReference type="ChiTaRS" id="Rab37">
    <property type="organism name" value="mouse"/>
</dbReference>
<dbReference type="PRO" id="PR:Q9JKM7"/>
<dbReference type="Proteomes" id="UP000000589">
    <property type="component" value="Unplaced"/>
</dbReference>
<dbReference type="RNAct" id="Q9JKM7">
    <property type="molecule type" value="protein"/>
</dbReference>
<dbReference type="GO" id="GO:0032391">
    <property type="term" value="C:photoreceptor connecting cilium"/>
    <property type="evidence" value="ECO:0000314"/>
    <property type="project" value="UniProtKB"/>
</dbReference>
<dbReference type="GO" id="GO:0030141">
    <property type="term" value="C:secretory granule"/>
    <property type="evidence" value="ECO:0000314"/>
    <property type="project" value="MGI"/>
</dbReference>
<dbReference type="GO" id="GO:0003925">
    <property type="term" value="F:G protein activity"/>
    <property type="evidence" value="ECO:0000250"/>
    <property type="project" value="UniProtKB"/>
</dbReference>
<dbReference type="GO" id="GO:0005525">
    <property type="term" value="F:GTP binding"/>
    <property type="evidence" value="ECO:0007669"/>
    <property type="project" value="UniProtKB-KW"/>
</dbReference>
<dbReference type="GO" id="GO:0003924">
    <property type="term" value="F:GTPase activity"/>
    <property type="evidence" value="ECO:0000250"/>
    <property type="project" value="MGI"/>
</dbReference>
<dbReference type="GO" id="GO:0010508">
    <property type="term" value="P:positive regulation of autophagy"/>
    <property type="evidence" value="ECO:0000314"/>
    <property type="project" value="UniProtKB"/>
</dbReference>
<dbReference type="GO" id="GO:0015031">
    <property type="term" value="P:protein transport"/>
    <property type="evidence" value="ECO:0007669"/>
    <property type="project" value="UniProtKB-KW"/>
</dbReference>
<dbReference type="GO" id="GO:0042478">
    <property type="term" value="P:regulation of eye photoreceptor cell development"/>
    <property type="evidence" value="ECO:0000314"/>
    <property type="project" value="UniProtKB"/>
</dbReference>
<dbReference type="CDD" id="cd04112">
    <property type="entry name" value="Rab26"/>
    <property type="match status" value="1"/>
</dbReference>
<dbReference type="FunFam" id="3.40.50.300:FF:000459">
    <property type="entry name" value="ras-related protein Rab-37 isoform X1"/>
    <property type="match status" value="1"/>
</dbReference>
<dbReference type="Gene3D" id="3.40.50.300">
    <property type="entry name" value="P-loop containing nucleotide triphosphate hydrolases"/>
    <property type="match status" value="1"/>
</dbReference>
<dbReference type="InterPro" id="IPR027417">
    <property type="entry name" value="P-loop_NTPase"/>
</dbReference>
<dbReference type="InterPro" id="IPR005225">
    <property type="entry name" value="Small_GTP-bd"/>
</dbReference>
<dbReference type="InterPro" id="IPR001806">
    <property type="entry name" value="Small_GTPase"/>
</dbReference>
<dbReference type="NCBIfam" id="TIGR00231">
    <property type="entry name" value="small_GTP"/>
    <property type="match status" value="1"/>
</dbReference>
<dbReference type="PANTHER" id="PTHR47978">
    <property type="match status" value="1"/>
</dbReference>
<dbReference type="Pfam" id="PF00071">
    <property type="entry name" value="Ras"/>
    <property type="match status" value="1"/>
</dbReference>
<dbReference type="PRINTS" id="PR00449">
    <property type="entry name" value="RASTRNSFRMNG"/>
</dbReference>
<dbReference type="SMART" id="SM00177">
    <property type="entry name" value="ARF"/>
    <property type="match status" value="1"/>
</dbReference>
<dbReference type="SMART" id="SM00175">
    <property type="entry name" value="RAB"/>
    <property type="match status" value="1"/>
</dbReference>
<dbReference type="SMART" id="SM00176">
    <property type="entry name" value="RAN"/>
    <property type="match status" value="1"/>
</dbReference>
<dbReference type="SMART" id="SM00173">
    <property type="entry name" value="RAS"/>
    <property type="match status" value="1"/>
</dbReference>
<dbReference type="SMART" id="SM00174">
    <property type="entry name" value="RHO"/>
    <property type="match status" value="1"/>
</dbReference>
<dbReference type="SUPFAM" id="SSF52540">
    <property type="entry name" value="P-loop containing nucleoside triphosphate hydrolases"/>
    <property type="match status" value="1"/>
</dbReference>
<dbReference type="PROSITE" id="PS51419">
    <property type="entry name" value="RAB"/>
    <property type="match status" value="1"/>
</dbReference>
<reference key="1">
    <citation type="journal article" date="2000" name="FEBS Lett.">
        <title>Rab37 is a novel mast cell specific GTPase localized to secretory granules.</title>
        <authorList>
            <person name="Masuda E.S."/>
            <person name="Luo Y."/>
            <person name="Young C."/>
            <person name="Shen M."/>
            <person name="Rossi A.B."/>
            <person name="Huang B.C."/>
            <person name="Yu S."/>
            <person name="Bennett M.K."/>
            <person name="Payan D.G."/>
            <person name="Scheller R.H."/>
        </authorList>
    </citation>
    <scope>NUCLEOTIDE SEQUENCE [MRNA]</scope>
    <scope>TISSUE SPECIFICITY</scope>
    <scope>SUBCELLULAR LOCATION</scope>
</reference>
<reference key="2">
    <citation type="journal article" date="2005" name="Science">
        <title>The transcriptional landscape of the mammalian genome.</title>
        <authorList>
            <person name="Carninci P."/>
            <person name="Kasukawa T."/>
            <person name="Katayama S."/>
            <person name="Gough J."/>
            <person name="Frith M.C."/>
            <person name="Maeda N."/>
            <person name="Oyama R."/>
            <person name="Ravasi T."/>
            <person name="Lenhard B."/>
            <person name="Wells C."/>
            <person name="Kodzius R."/>
            <person name="Shimokawa K."/>
            <person name="Bajic V.B."/>
            <person name="Brenner S.E."/>
            <person name="Batalov S."/>
            <person name="Forrest A.R."/>
            <person name="Zavolan M."/>
            <person name="Davis M.J."/>
            <person name="Wilming L.G."/>
            <person name="Aidinis V."/>
            <person name="Allen J.E."/>
            <person name="Ambesi-Impiombato A."/>
            <person name="Apweiler R."/>
            <person name="Aturaliya R.N."/>
            <person name="Bailey T.L."/>
            <person name="Bansal M."/>
            <person name="Baxter L."/>
            <person name="Beisel K.W."/>
            <person name="Bersano T."/>
            <person name="Bono H."/>
            <person name="Chalk A.M."/>
            <person name="Chiu K.P."/>
            <person name="Choudhary V."/>
            <person name="Christoffels A."/>
            <person name="Clutterbuck D.R."/>
            <person name="Crowe M.L."/>
            <person name="Dalla E."/>
            <person name="Dalrymple B.P."/>
            <person name="de Bono B."/>
            <person name="Della Gatta G."/>
            <person name="di Bernardo D."/>
            <person name="Down T."/>
            <person name="Engstrom P."/>
            <person name="Fagiolini M."/>
            <person name="Faulkner G."/>
            <person name="Fletcher C.F."/>
            <person name="Fukushima T."/>
            <person name="Furuno M."/>
            <person name="Futaki S."/>
            <person name="Gariboldi M."/>
            <person name="Georgii-Hemming P."/>
            <person name="Gingeras T.R."/>
            <person name="Gojobori T."/>
            <person name="Green R.E."/>
            <person name="Gustincich S."/>
            <person name="Harbers M."/>
            <person name="Hayashi Y."/>
            <person name="Hensch T.K."/>
            <person name="Hirokawa N."/>
            <person name="Hill D."/>
            <person name="Huminiecki L."/>
            <person name="Iacono M."/>
            <person name="Ikeo K."/>
            <person name="Iwama A."/>
            <person name="Ishikawa T."/>
            <person name="Jakt M."/>
            <person name="Kanapin A."/>
            <person name="Katoh M."/>
            <person name="Kawasawa Y."/>
            <person name="Kelso J."/>
            <person name="Kitamura H."/>
            <person name="Kitano H."/>
            <person name="Kollias G."/>
            <person name="Krishnan S.P."/>
            <person name="Kruger A."/>
            <person name="Kummerfeld S.K."/>
            <person name="Kurochkin I.V."/>
            <person name="Lareau L.F."/>
            <person name="Lazarevic D."/>
            <person name="Lipovich L."/>
            <person name="Liu J."/>
            <person name="Liuni S."/>
            <person name="McWilliam S."/>
            <person name="Madan Babu M."/>
            <person name="Madera M."/>
            <person name="Marchionni L."/>
            <person name="Matsuda H."/>
            <person name="Matsuzawa S."/>
            <person name="Miki H."/>
            <person name="Mignone F."/>
            <person name="Miyake S."/>
            <person name="Morris K."/>
            <person name="Mottagui-Tabar S."/>
            <person name="Mulder N."/>
            <person name="Nakano N."/>
            <person name="Nakauchi H."/>
            <person name="Ng P."/>
            <person name="Nilsson R."/>
            <person name="Nishiguchi S."/>
            <person name="Nishikawa S."/>
            <person name="Nori F."/>
            <person name="Ohara O."/>
            <person name="Okazaki Y."/>
            <person name="Orlando V."/>
            <person name="Pang K.C."/>
            <person name="Pavan W.J."/>
            <person name="Pavesi G."/>
            <person name="Pesole G."/>
            <person name="Petrovsky N."/>
            <person name="Piazza S."/>
            <person name="Reed J."/>
            <person name="Reid J.F."/>
            <person name="Ring B.Z."/>
            <person name="Ringwald M."/>
            <person name="Rost B."/>
            <person name="Ruan Y."/>
            <person name="Salzberg S.L."/>
            <person name="Sandelin A."/>
            <person name="Schneider C."/>
            <person name="Schoenbach C."/>
            <person name="Sekiguchi K."/>
            <person name="Semple C.A."/>
            <person name="Seno S."/>
            <person name="Sessa L."/>
            <person name="Sheng Y."/>
            <person name="Shibata Y."/>
            <person name="Shimada H."/>
            <person name="Shimada K."/>
            <person name="Silva D."/>
            <person name="Sinclair B."/>
            <person name="Sperling S."/>
            <person name="Stupka E."/>
            <person name="Sugiura K."/>
            <person name="Sultana R."/>
            <person name="Takenaka Y."/>
            <person name="Taki K."/>
            <person name="Tammoja K."/>
            <person name="Tan S.L."/>
            <person name="Tang S."/>
            <person name="Taylor M.S."/>
            <person name="Tegner J."/>
            <person name="Teichmann S.A."/>
            <person name="Ueda H.R."/>
            <person name="van Nimwegen E."/>
            <person name="Verardo R."/>
            <person name="Wei C.L."/>
            <person name="Yagi K."/>
            <person name="Yamanishi H."/>
            <person name="Zabarovsky E."/>
            <person name="Zhu S."/>
            <person name="Zimmer A."/>
            <person name="Hide W."/>
            <person name="Bult C."/>
            <person name="Grimmond S.M."/>
            <person name="Teasdale R.D."/>
            <person name="Liu E.T."/>
            <person name="Brusic V."/>
            <person name="Quackenbush J."/>
            <person name="Wahlestedt C."/>
            <person name="Mattick J.S."/>
            <person name="Hume D.A."/>
            <person name="Kai C."/>
            <person name="Sasaki D."/>
            <person name="Tomaru Y."/>
            <person name="Fukuda S."/>
            <person name="Kanamori-Katayama M."/>
            <person name="Suzuki M."/>
            <person name="Aoki J."/>
            <person name="Arakawa T."/>
            <person name="Iida J."/>
            <person name="Imamura K."/>
            <person name="Itoh M."/>
            <person name="Kato T."/>
            <person name="Kawaji H."/>
            <person name="Kawagashira N."/>
            <person name="Kawashima T."/>
            <person name="Kojima M."/>
            <person name="Kondo S."/>
            <person name="Konno H."/>
            <person name="Nakano K."/>
            <person name="Ninomiya N."/>
            <person name="Nishio T."/>
            <person name="Okada M."/>
            <person name="Plessy C."/>
            <person name="Shibata K."/>
            <person name="Shiraki T."/>
            <person name="Suzuki S."/>
            <person name="Tagami M."/>
            <person name="Waki K."/>
            <person name="Watahiki A."/>
            <person name="Okamura-Oho Y."/>
            <person name="Suzuki H."/>
            <person name="Kawai J."/>
            <person name="Hayashizaki Y."/>
        </authorList>
    </citation>
    <scope>NUCLEOTIDE SEQUENCE [LARGE SCALE MRNA]</scope>
    <source>
        <strain>C57BL/6J</strain>
        <tissue>Pancreas</tissue>
    </source>
</reference>
<reference key="3">
    <citation type="submission" date="2007-04" db="UniProtKB">
        <authorList>
            <person name="Lubec G."/>
            <person name="Kang S.U."/>
        </authorList>
    </citation>
    <scope>PROTEIN SEQUENCE OF 71-91</scope>
    <scope>IDENTIFICATION BY MASS SPECTROMETRY</scope>
    <source>
        <strain>C57BL/6J</strain>
        <tissue>Brain</tissue>
    </source>
</reference>
<reference key="4">
    <citation type="journal article" date="2003" name="J. Biol. Chem.">
        <title>Distinct Rab binding specificity of Rim1, Rim2, rabphilin, and Noc2. Identification of a critical determinant of Rab3A/Rab27A recognition by Rim2.</title>
        <authorList>
            <person name="Fukuda M."/>
        </authorList>
    </citation>
    <scope>INTERACTION WITH RIMS1</scope>
</reference>
<reference key="5">
    <citation type="journal article" date="2010" name="Cell">
        <title>A tissue-specific atlas of mouse protein phosphorylation and expression.</title>
        <authorList>
            <person name="Huttlin E.L."/>
            <person name="Jedrychowski M.P."/>
            <person name="Elias J.E."/>
            <person name="Goswami T."/>
            <person name="Rad R."/>
            <person name="Beausoleil S.A."/>
            <person name="Villen J."/>
            <person name="Haas W."/>
            <person name="Sowa M.E."/>
            <person name="Gygi S.P."/>
        </authorList>
    </citation>
    <scope>IDENTIFICATION BY MASS SPECTROMETRY [LARGE SCALE ANALYSIS]</scope>
    <source>
        <tissue>Brain</tissue>
    </source>
</reference>
<reference key="6">
    <citation type="journal article" date="2024" name="Cell Rep.">
        <title>RPGR is a guanine nucleotide exchange factor for the small GTPase RAB37 required for retinal function via autophagy regulation.</title>
        <authorList>
            <person name="Ying R."/>
            <person name="Li C."/>
            <person name="Li H."/>
            <person name="Zou J."/>
            <person name="Hu M."/>
            <person name="Hong Q."/>
            <person name="Shen Y."/>
            <person name="Hou L."/>
            <person name="Cheng H."/>
            <person name="Zhou R."/>
        </authorList>
    </citation>
    <scope>FUNCTION</scope>
    <scope>INTERACTION WITH RPGR</scope>
    <scope>SUBCELLULAR LOCATION</scope>
    <scope>ACTIVITY REGULATION</scope>
    <scope>TISSUE SPECIFICITY</scope>
</reference>